<sequence>MPQFDESFLSDCALADRWHFYSYTVKQLPPHPSPKPNRNRNPYPSGASHDDHQHQLHHHHHQQHHHNHHRLWKTQRQSWSPRDTNNNHSLTSNNCNCNSSNTCNSISATGNTLHSIKFHRRRKYKKLARLALSTPAIPLQMDVDVDVNVTVDREFDMEMDTPVPLKNAVCHGSISSPSTPGTCSSGIGVGGGGCSSSSNNSINSGSYSTACTPPPPTHQHHSQHQQLQGTPGGSSRVGGAGAGGGGGVPPAPPSAGSSGHKNSLKGTKLARRARSFKDDLIEKISLMRTTNNTLGRSHSPHSPRTKHGTKAPPTTEEVLRSTQTLETHVKDISNALKHFRDVILKKKLEVLPGNGTVILETIASMYSVIQTYTLNENSAIMSSATLQVYQSLGKLIKLCDEVMLSEDSGECASLSNENVREVIDLLEDAVRNLVTLAQGKLKEQDQCAFRYSGSGLGGIGAAAEIMGAVTASPGASVPGTGVMRVSAAESAAQRTSLPDIALTPKERDILEQHNVNPMRGSHSTESILRDTSPPPKPPLPNRASNPPPLPPKRRSQPSASAGTVGVGCSSSTSTSNQASPLPYAQSHNISLNSDLDCSSNISLLNYGVDRLSVRSRSPDENSQCSFDSALNHSREEEDQQQQHQHLRSFPKLAAMMDEDMDKMVSYSAAIDDKTQTPLSTGGGIAGVAGGTGGAGEGVAAAASGDGETNSNRHSNESGFVSMREFRTSTQTTDYSVQSSTKSSSSNSEIAFSISESTAVGSSSEYQQISQLVSHSQRHISSSSSSCTTTTTSSSTTTGYGSSEVEQLQQQQQQQTTTTPADLAPALPPKSIQRSSLTRHDSPGVGDELDEVQSSSGWASHRSSQSEVAELRQLSPLHHLNHHPHTASAGQLQQWHSKHHSLIEGPRLQLAGSGSCSAFDQRHLDQEPPPLPIKKKHILAYMEICSASTRSIEQHRHTMHACNISRNISHSQTMNIMPMSKELSPELEMPPALPPKNYKQRKATSMVASPTLQPVIVTTPPPSPKPTLGENGSTGRPDSRMATVCEELNDAVASEDAMPEPRSPVLDSNENVSAVDDGQTFYCHSHQLPAAEMEMSEDASSADNQPITTPQVLEEQEEPTAESRPLVAVHESVKPANVDEDEEAERADMLINMLEEVNITRYLILKKREEDGPEVKGGYIDALIVHASRVQKVADNAFCEAFITTFRTFIQPIDVIEKLTHRYTYFFCQVQDNKQKAAKETFALLVRVVNDLTSTDLTSQLLSLLVEFVYQLVCSGQLYLAKLLRNKFVEKVTLYKEPKVYGFVGELGGAGSVGGAGIAGSGGCSGTAGGGNQPSLLDLKSLEIAEQMTLLDAELFTKIEIPEVLLFAKDQCEEKSPNLNKFTEHFNKMSYWARSKILRLQDAKEREKHVNKFIKIMKHLRKMNNYNSYLALLSALDSGPIRRLEWQKGITEEVRSFCALIDSSSSFRAYRQALAETNPPCIPYIGLILQDLTFVHVGNQDYLSKGVINFSKRWQQYNIIDNMKRFKKCAYPFRRNERIIRFFDNFKDFMGEEEMWQISEKIKPRGRRPVNY</sequence>
<keyword id="KW-0025">Alternative splicing</keyword>
<keyword id="KW-0217">Developmental protein</keyword>
<keyword id="KW-0344">Guanine-nucleotide releasing factor</keyword>
<keyword id="KW-0597">Phosphoprotein</keyword>
<keyword id="KW-1185">Reference proteome</keyword>
<keyword id="KW-0729">SH3-binding</keyword>
<dbReference type="EMBL" id="AF053358">
    <property type="protein sequence ID" value="AAC35280.1"/>
    <property type="status" value="ALT_FRAME"/>
    <property type="molecule type" value="mRNA"/>
</dbReference>
<dbReference type="EMBL" id="AE014298">
    <property type="protein sequence ID" value="AAF46200.2"/>
    <property type="molecule type" value="Genomic_DNA"/>
</dbReference>
<dbReference type="EMBL" id="AE014298">
    <property type="protein sequence ID" value="AAO41635.1"/>
    <property type="molecule type" value="Genomic_DNA"/>
</dbReference>
<dbReference type="EMBL" id="BT010019">
    <property type="protein sequence ID" value="AAQ22488.1"/>
    <property type="status" value="ALT_FRAME"/>
    <property type="molecule type" value="mRNA"/>
</dbReference>
<dbReference type="EMBL" id="BT025818">
    <property type="protein sequence ID" value="ABF85718.1"/>
    <property type="molecule type" value="mRNA"/>
</dbReference>
<dbReference type="EMBL" id="AY113355">
    <property type="protein sequence ID" value="AAM29360.1"/>
    <property type="status" value="ALT_FRAME"/>
    <property type="molecule type" value="mRNA"/>
</dbReference>
<dbReference type="PIR" id="T13052">
    <property type="entry name" value="T13052"/>
</dbReference>
<dbReference type="RefSeq" id="NP_572350.2">
    <molecule id="O77086-1"/>
    <property type="nucleotide sequence ID" value="NM_132122.5"/>
</dbReference>
<dbReference type="RefSeq" id="NP_788867.1">
    <molecule id="O77086-2"/>
    <property type="nucleotide sequence ID" value="NM_176694.3"/>
</dbReference>
<dbReference type="SMR" id="O77086"/>
<dbReference type="BioGRID" id="58103">
    <property type="interactions" value="11"/>
</dbReference>
<dbReference type="FunCoup" id="O77086">
    <property type="interactions" value="801"/>
</dbReference>
<dbReference type="IntAct" id="O77086">
    <property type="interactions" value="14"/>
</dbReference>
<dbReference type="STRING" id="7227.FBpp0289753"/>
<dbReference type="GlyGen" id="O77086">
    <property type="glycosylation" value="1 site"/>
</dbReference>
<dbReference type="iPTMnet" id="O77086"/>
<dbReference type="PaxDb" id="7227-FBpp0289753"/>
<dbReference type="DNASU" id="31618"/>
<dbReference type="EnsemblMetazoa" id="FBtr0299791">
    <molecule id="O77086-2"/>
    <property type="protein sequence ID" value="FBpp0289069"/>
    <property type="gene ID" value="FBgn0259228"/>
</dbReference>
<dbReference type="EnsemblMetazoa" id="FBtr0300526">
    <molecule id="O77086-1"/>
    <property type="protein sequence ID" value="FBpp0289753"/>
    <property type="gene ID" value="FBgn0259228"/>
</dbReference>
<dbReference type="GeneID" id="31618"/>
<dbReference type="KEGG" id="dme:Dmel_CG42328"/>
<dbReference type="UCSC" id="CG42328-RB">
    <property type="organism name" value="d. melanogaster"/>
</dbReference>
<dbReference type="AGR" id="FB:FBgn0259228"/>
<dbReference type="CTD" id="31618"/>
<dbReference type="FlyBase" id="FBgn0259228">
    <property type="gene designation" value="C3G"/>
</dbReference>
<dbReference type="VEuPathDB" id="VectorBase:FBgn0259228"/>
<dbReference type="eggNOG" id="KOG3417">
    <property type="taxonomic scope" value="Eukaryota"/>
</dbReference>
<dbReference type="GeneTree" id="ENSGT00940000156235"/>
<dbReference type="InParanoid" id="O77086"/>
<dbReference type="OMA" id="LAYMEVC"/>
<dbReference type="OrthoDB" id="25179at2759"/>
<dbReference type="PhylomeDB" id="O77086"/>
<dbReference type="Reactome" id="R-DME-186763">
    <property type="pathway name" value="Downstream signal transduction"/>
</dbReference>
<dbReference type="Reactome" id="R-DME-9013423">
    <property type="pathway name" value="RAC3 GTPase cycle"/>
</dbReference>
<dbReference type="Reactome" id="R-DME-9027284">
    <property type="pathway name" value="Erythropoietin activates RAS"/>
</dbReference>
<dbReference type="Reactome" id="R-DME-912631">
    <property type="pathway name" value="Regulation of signaling by CBL"/>
</dbReference>
<dbReference type="SignaLink" id="O77086"/>
<dbReference type="BioGRID-ORCS" id="31618">
    <property type="hits" value="0 hits in 1 CRISPR screen"/>
</dbReference>
<dbReference type="GenomeRNAi" id="31618"/>
<dbReference type="PRO" id="PR:O77086"/>
<dbReference type="Proteomes" id="UP000000803">
    <property type="component" value="Chromosome X"/>
</dbReference>
<dbReference type="Bgee" id="FBgn0259228">
    <property type="expression patterns" value="Expressed in adult Malpighian tubule principal cell of initial segment in Malpighian tubule and 259 other cell types or tissues"/>
</dbReference>
<dbReference type="ExpressionAtlas" id="O77086">
    <property type="expression patterns" value="baseline and differential"/>
</dbReference>
<dbReference type="GO" id="GO:0005886">
    <property type="term" value="C:plasma membrane"/>
    <property type="evidence" value="ECO:0000318"/>
    <property type="project" value="GO_Central"/>
</dbReference>
<dbReference type="GO" id="GO:0005085">
    <property type="term" value="F:guanyl-nucleotide exchange factor activity"/>
    <property type="evidence" value="ECO:0000314"/>
    <property type="project" value="FlyBase"/>
</dbReference>
<dbReference type="GO" id="GO:0017124">
    <property type="term" value="F:SH3 domain binding"/>
    <property type="evidence" value="ECO:0007669"/>
    <property type="project" value="UniProtKB-KW"/>
</dbReference>
<dbReference type="GO" id="GO:0016203">
    <property type="term" value="P:muscle attachment"/>
    <property type="evidence" value="ECO:0000315"/>
    <property type="project" value="FlyBase"/>
</dbReference>
<dbReference type="GO" id="GO:0045880">
    <property type="term" value="P:positive regulation of smoothened signaling pathway"/>
    <property type="evidence" value="ECO:0000314"/>
    <property type="project" value="FlyBase"/>
</dbReference>
<dbReference type="GO" id="GO:0007265">
    <property type="term" value="P:Ras protein signal transduction"/>
    <property type="evidence" value="ECO:0000315"/>
    <property type="project" value="UniProtKB"/>
</dbReference>
<dbReference type="GO" id="GO:0045214">
    <property type="term" value="P:sarcomere organization"/>
    <property type="evidence" value="ECO:0000315"/>
    <property type="project" value="FlyBase"/>
</dbReference>
<dbReference type="GO" id="GO:0007525">
    <property type="term" value="P:somatic muscle development"/>
    <property type="evidence" value="ECO:0000315"/>
    <property type="project" value="FlyBase"/>
</dbReference>
<dbReference type="CDD" id="cd00155">
    <property type="entry name" value="RasGEF"/>
    <property type="match status" value="1"/>
</dbReference>
<dbReference type="CDD" id="cd06224">
    <property type="entry name" value="REM"/>
    <property type="match status" value="1"/>
</dbReference>
<dbReference type="FunFam" id="1.10.840.10:FF:000009">
    <property type="entry name" value="rap guanine nucleotide exchange factor 1"/>
    <property type="match status" value="1"/>
</dbReference>
<dbReference type="Gene3D" id="1.10.840.10">
    <property type="entry name" value="Ras guanine-nucleotide exchange factors catalytic domain"/>
    <property type="match status" value="1"/>
</dbReference>
<dbReference type="Gene3D" id="1.20.870.10">
    <property type="entry name" value="Son of sevenless (SoS) protein Chain: S domain 1"/>
    <property type="match status" value="1"/>
</dbReference>
<dbReference type="InterPro" id="IPR008937">
    <property type="entry name" value="Ras-like_GEF"/>
</dbReference>
<dbReference type="InterPro" id="IPR000651">
    <property type="entry name" value="Ras-like_Gua-exchang_fac_N"/>
</dbReference>
<dbReference type="InterPro" id="IPR019804">
    <property type="entry name" value="Ras_G-nucl-exch_fac_CS"/>
</dbReference>
<dbReference type="InterPro" id="IPR023578">
    <property type="entry name" value="Ras_GEF_dom_sf"/>
</dbReference>
<dbReference type="InterPro" id="IPR001895">
    <property type="entry name" value="RASGEF_cat_dom"/>
</dbReference>
<dbReference type="InterPro" id="IPR036964">
    <property type="entry name" value="RASGEF_cat_dom_sf"/>
</dbReference>
<dbReference type="PANTHER" id="PTHR23113">
    <property type="entry name" value="GUANINE NUCLEOTIDE EXCHANGE FACTOR"/>
    <property type="match status" value="1"/>
</dbReference>
<dbReference type="PANTHER" id="PTHR23113:SF224">
    <property type="entry name" value="RAP GUANINE NUCLEOTIDE EXCHANGE FACTOR 1"/>
    <property type="match status" value="1"/>
</dbReference>
<dbReference type="Pfam" id="PF00617">
    <property type="entry name" value="RasGEF"/>
    <property type="match status" value="1"/>
</dbReference>
<dbReference type="Pfam" id="PF00618">
    <property type="entry name" value="RasGEF_N"/>
    <property type="match status" value="1"/>
</dbReference>
<dbReference type="SMART" id="SM00147">
    <property type="entry name" value="RasGEF"/>
    <property type="match status" value="1"/>
</dbReference>
<dbReference type="SMART" id="SM00229">
    <property type="entry name" value="RasGEFN"/>
    <property type="match status" value="1"/>
</dbReference>
<dbReference type="SUPFAM" id="SSF48366">
    <property type="entry name" value="Ras GEF"/>
    <property type="match status" value="1"/>
</dbReference>
<dbReference type="PROSITE" id="PS00720">
    <property type="entry name" value="RASGEF"/>
    <property type="match status" value="1"/>
</dbReference>
<dbReference type="PROSITE" id="PS50009">
    <property type="entry name" value="RASGEF_CAT"/>
    <property type="match status" value="1"/>
</dbReference>
<dbReference type="PROSITE" id="PS50212">
    <property type="entry name" value="RASGEF_NTER"/>
    <property type="match status" value="1"/>
</dbReference>
<gene>
    <name type="primary">C3G</name>
    <name type="ORF">CG42328</name>
</gene>
<accession>O77086</accession>
<accession>Q1ECB6</accession>
<accession>Q7YU30</accession>
<accession>Q86B63</accession>
<accession>Q9W3W3</accession>
<evidence type="ECO:0000255" key="1"/>
<evidence type="ECO:0000255" key="2">
    <source>
        <dbReference type="PROSITE-ProRule" id="PRU00135"/>
    </source>
</evidence>
<evidence type="ECO:0000255" key="3">
    <source>
        <dbReference type="PROSITE-ProRule" id="PRU00168"/>
    </source>
</evidence>
<evidence type="ECO:0000256" key="4">
    <source>
        <dbReference type="SAM" id="MobiDB-lite"/>
    </source>
</evidence>
<evidence type="ECO:0000269" key="5">
    <source>
    </source>
</evidence>
<evidence type="ECO:0000269" key="6">
    <source>
    </source>
</evidence>
<evidence type="ECO:0000303" key="7">
    <source>
    </source>
</evidence>
<evidence type="ECO:0000303" key="8">
    <source ref="4"/>
</evidence>
<evidence type="ECO:0000305" key="9"/>
<evidence type="ECO:0000312" key="10">
    <source>
        <dbReference type="EMBL" id="AAF46200.2"/>
    </source>
</evidence>
<name>C3G_DROME</name>
<feature type="chain" id="PRO_0000068860" description="Guanine nucleotide-releasing factor 2">
    <location>
        <begin position="1"/>
        <end position="1571"/>
    </location>
</feature>
<feature type="domain" description="N-terminal Ras-GEF" evidence="2">
    <location>
        <begin position="1170"/>
        <end position="1292"/>
    </location>
</feature>
<feature type="domain" description="Ras-GEF" evidence="3">
    <location>
        <begin position="1339"/>
        <end position="1564"/>
    </location>
</feature>
<feature type="region of interest" description="Disordered" evidence="4">
    <location>
        <begin position="28"/>
        <end position="85"/>
    </location>
</feature>
<feature type="region of interest" description="Disordered" evidence="4">
    <location>
        <begin position="202"/>
        <end position="271"/>
    </location>
</feature>
<feature type="region of interest" description="Disordered" evidence="4">
    <location>
        <begin position="287"/>
        <end position="316"/>
    </location>
</feature>
<feature type="region of interest" description="Disordered" evidence="4">
    <location>
        <begin position="513"/>
        <end position="580"/>
    </location>
</feature>
<feature type="region of interest" description="Disordered" evidence="4">
    <location>
        <begin position="614"/>
        <end position="646"/>
    </location>
</feature>
<feature type="region of interest" description="Disordered" evidence="4">
    <location>
        <begin position="695"/>
        <end position="719"/>
    </location>
</feature>
<feature type="region of interest" description="Disordered" evidence="4">
    <location>
        <begin position="728"/>
        <end position="747"/>
    </location>
</feature>
<feature type="region of interest" description="Disordered" evidence="4">
    <location>
        <begin position="776"/>
        <end position="868"/>
    </location>
</feature>
<feature type="region of interest" description="Disordered" evidence="4">
    <location>
        <begin position="879"/>
        <end position="898"/>
    </location>
</feature>
<feature type="region of interest" description="Disordered" evidence="4">
    <location>
        <begin position="1013"/>
        <end position="1038"/>
    </location>
</feature>
<feature type="short sequence motif" description="SH3-binding" evidence="1">
    <location>
        <begin position="546"/>
        <end position="556"/>
    </location>
</feature>
<feature type="short sequence motif" description="SH3-binding" evidence="1">
    <location>
        <begin position="820"/>
        <end position="831"/>
    </location>
</feature>
<feature type="short sequence motif" description="SH3-binding" evidence="1">
    <location>
        <begin position="924"/>
        <end position="935"/>
    </location>
</feature>
<feature type="short sequence motif" description="SH3-binding" evidence="1">
    <location>
        <begin position="986"/>
        <end position="997"/>
    </location>
</feature>
<feature type="compositionally biased region" description="Basic residues" evidence="4">
    <location>
        <begin position="55"/>
        <end position="73"/>
    </location>
</feature>
<feature type="compositionally biased region" description="Polar residues" evidence="4">
    <location>
        <begin position="74"/>
        <end position="83"/>
    </location>
</feature>
<feature type="compositionally biased region" description="Gly residues" evidence="4">
    <location>
        <begin position="230"/>
        <end position="248"/>
    </location>
</feature>
<feature type="compositionally biased region" description="Polar residues" evidence="4">
    <location>
        <begin position="287"/>
        <end position="297"/>
    </location>
</feature>
<feature type="compositionally biased region" description="Basic residues" evidence="4">
    <location>
        <begin position="298"/>
        <end position="309"/>
    </location>
</feature>
<feature type="compositionally biased region" description="Pro residues" evidence="4">
    <location>
        <begin position="532"/>
        <end position="550"/>
    </location>
</feature>
<feature type="compositionally biased region" description="Low complexity" evidence="4">
    <location>
        <begin position="556"/>
        <end position="579"/>
    </location>
</feature>
<feature type="compositionally biased region" description="Polar residues" evidence="4">
    <location>
        <begin position="620"/>
        <end position="631"/>
    </location>
</feature>
<feature type="compositionally biased region" description="Low complexity" evidence="4">
    <location>
        <begin position="697"/>
        <end position="707"/>
    </location>
</feature>
<feature type="compositionally biased region" description="Polar residues" evidence="4">
    <location>
        <begin position="708"/>
        <end position="718"/>
    </location>
</feature>
<feature type="compositionally biased region" description="Low complexity" evidence="4">
    <location>
        <begin position="735"/>
        <end position="747"/>
    </location>
</feature>
<feature type="compositionally biased region" description="Low complexity" evidence="4">
    <location>
        <begin position="780"/>
        <end position="824"/>
    </location>
</feature>
<feature type="compositionally biased region" description="Polar residues" evidence="4">
    <location>
        <begin position="851"/>
        <end position="866"/>
    </location>
</feature>
<feature type="modified residue" description="Phosphoserine" evidence="5">
    <location>
        <position position="496"/>
    </location>
</feature>
<feature type="modified residue" description="Phosphoserine" evidence="5">
    <location>
        <position position="523"/>
    </location>
</feature>
<feature type="modified residue" description="Phosphothreonine" evidence="5">
    <location>
        <position position="524"/>
    </location>
</feature>
<feature type="modified residue" description="Phosphoserine" evidence="5">
    <location>
        <position position="526"/>
    </location>
</feature>
<feature type="modified residue" description="Phosphoserine" evidence="5">
    <location>
        <position position="615"/>
    </location>
</feature>
<feature type="splice variant" id="VSP_035657" description="In isoform C." evidence="8">
    <original>PQFDESFLSDCALADRWHFYSYTVKQLPPHPSPKPNRNRNPYPSGASHDDHQHQLHHHHHQQHHHN</original>
    <variation>RVLNTELRLRFKNRKPRPFNRAASADDAMDLGSGVGVGTGIANGAGIGVGATIMPLDQLNGATSMN</variation>
    <location>
        <begin position="2"/>
        <end position="67"/>
    </location>
</feature>
<feature type="splice variant" id="VSP_035658" description="In isoform C." evidence="8">
    <location>
        <begin position="68"/>
        <end position="171"/>
    </location>
</feature>
<feature type="splice variant" id="VSP_001823" description="In isoform B and isoform C." evidence="7 8">
    <location>
        <begin position="668"/>
        <end position="718"/>
    </location>
</feature>
<feature type="sequence conflict" description="In Ref. 1; AAC35280." evidence="9" ref="1">
    <original>H</original>
    <variation>Y</variation>
    <location>
        <position position="19"/>
    </location>
</feature>
<feature type="sequence conflict" description="In Ref. 1; AAC35280." evidence="9" ref="1">
    <original>N</original>
    <variation>S</variation>
    <location>
        <position position="93"/>
    </location>
</feature>
<feature type="sequence conflict" description="In Ref. 1; AAC35280." evidence="9" ref="1">
    <original>E</original>
    <variation>V</variation>
    <location>
        <position position="154"/>
    </location>
</feature>
<feature type="sequence conflict" description="In Ref. 1; AAC35280." evidence="9" ref="1">
    <original>I</original>
    <variation>T</variation>
    <location>
        <position position="202"/>
    </location>
</feature>
<feature type="sequence conflict" description="In Ref. 1; AAC35280." evidence="9" ref="1">
    <original>A</original>
    <variation>AGA</variation>
    <location>
        <position position="242"/>
    </location>
</feature>
<feature type="sequence conflict" description="In Ref. 4; AAQ22488." evidence="9" ref="4">
    <original>T</original>
    <variation>A</variation>
    <location>
        <position position="267"/>
    </location>
</feature>
<feature type="sequence conflict" description="In Ref. 1; AAC35280." evidence="9" ref="1">
    <original>RYSG</original>
    <variation>HYRR</variation>
    <location>
        <begin position="450"/>
        <end position="453"/>
    </location>
</feature>
<feature type="sequence conflict" description="In Ref. 1; AAC35280." evidence="9" ref="1">
    <original>V</original>
    <variation>I</variation>
    <location>
        <position position="477"/>
    </location>
</feature>
<feature type="sequence conflict" description="In Ref. 1; AAC35280." evidence="9" ref="1">
    <original>L</original>
    <variation>Q</variation>
    <location>
        <position position="807"/>
    </location>
</feature>
<feature type="sequence conflict" description="In Ref. 1; AAC35280." evidence="9" ref="1">
    <original>T</original>
    <variation>TT</variation>
    <location>
        <position position="818"/>
    </location>
</feature>
<feature type="sequence conflict" description="In Ref. 1; AAC35280." evidence="9" ref="1">
    <original>V</original>
    <variation>A</variation>
    <location>
        <position position="851"/>
    </location>
</feature>
<feature type="sequence conflict" description="In Ref. 1; AAC35280." evidence="9" ref="1">
    <original>S</original>
    <variation>N</variation>
    <location>
        <position position="1004"/>
    </location>
</feature>
<feature type="sequence conflict" description="In Ref. 1; AAC35280 and 5; AAM29360." evidence="9" ref="1 5">
    <original>M</original>
    <variation>L</variation>
    <location>
        <position position="1092"/>
    </location>
</feature>
<feature type="sequence conflict" description="In Ref. 1; AAC35280 and 5; AAM29360." evidence="9" ref="1 5">
    <original>A</original>
    <variation>P</variation>
    <location>
        <position position="1127"/>
    </location>
</feature>
<feature type="sequence conflict" description="In Ref. 4; AAQ22488." evidence="9" ref="4">
    <original>V</original>
    <variation>E</variation>
    <location>
        <position position="1291"/>
    </location>
</feature>
<feature type="sequence conflict" description="In Ref. 1; AAC35280 and 5; AAM29360." evidence="9" ref="1 5">
    <original>S</original>
    <variation>G</variation>
    <location>
        <position position="1311"/>
    </location>
</feature>
<feature type="sequence conflict" description="In Ref. 4; AAQ22488." evidence="9" ref="4">
    <original>N</original>
    <variation>S</variation>
    <location>
        <position position="1379"/>
    </location>
</feature>
<proteinExistence type="evidence at protein level"/>
<protein>
    <recommendedName>
        <fullName>Guanine nucleotide-releasing factor 2</fullName>
    </recommendedName>
    <alternativeName>
        <fullName>CRK SH3-binding GNRP</fullName>
        <shortName>DC3G</shortName>
    </alternativeName>
</protein>
<organism evidence="10">
    <name type="scientific">Drosophila melanogaster</name>
    <name type="common">Fruit fly</name>
    <dbReference type="NCBI Taxonomy" id="7227"/>
    <lineage>
        <taxon>Eukaryota</taxon>
        <taxon>Metazoa</taxon>
        <taxon>Ecdysozoa</taxon>
        <taxon>Arthropoda</taxon>
        <taxon>Hexapoda</taxon>
        <taxon>Insecta</taxon>
        <taxon>Pterygota</taxon>
        <taxon>Neoptera</taxon>
        <taxon>Endopterygota</taxon>
        <taxon>Diptera</taxon>
        <taxon>Brachycera</taxon>
        <taxon>Muscomorpha</taxon>
        <taxon>Ephydroidea</taxon>
        <taxon>Drosophilidae</taxon>
        <taxon>Drosophila</taxon>
        <taxon>Sophophora</taxon>
    </lineage>
</organism>
<reference evidence="9" key="1">
    <citation type="journal article" date="1999" name="EMBO J.">
        <title>Activation of the Drosophila C3G leads to cell fate changes and overproliferation during development, mediated by the RAS-MAPK pathway and RAP1.</title>
        <authorList>
            <person name="Ishimaru S."/>
            <person name="Gaul U."/>
            <person name="Hanafusa H."/>
        </authorList>
    </citation>
    <scope>NUCLEOTIDE SEQUENCE [MRNA] (ISOFORM B)</scope>
    <scope>FUNCTION</scope>
    <scope>TISSUE SPECIFICITY</scope>
    <scope>DEVELOPMENTAL STAGE</scope>
    <source>
        <tissue>Eye imaginal disk</tissue>
    </source>
</reference>
<reference evidence="9" key="2">
    <citation type="journal article" date="2000" name="Science">
        <title>The genome sequence of Drosophila melanogaster.</title>
        <authorList>
            <person name="Adams M.D."/>
            <person name="Celniker S.E."/>
            <person name="Holt R.A."/>
            <person name="Evans C.A."/>
            <person name="Gocayne J.D."/>
            <person name="Amanatides P.G."/>
            <person name="Scherer S.E."/>
            <person name="Li P.W."/>
            <person name="Hoskins R.A."/>
            <person name="Galle R.F."/>
            <person name="George R.A."/>
            <person name="Lewis S.E."/>
            <person name="Richards S."/>
            <person name="Ashburner M."/>
            <person name="Henderson S.N."/>
            <person name="Sutton G.G."/>
            <person name="Wortman J.R."/>
            <person name="Yandell M.D."/>
            <person name="Zhang Q."/>
            <person name="Chen L.X."/>
            <person name="Brandon R.C."/>
            <person name="Rogers Y.-H.C."/>
            <person name="Blazej R.G."/>
            <person name="Champe M."/>
            <person name="Pfeiffer B.D."/>
            <person name="Wan K.H."/>
            <person name="Doyle C."/>
            <person name="Baxter E.G."/>
            <person name="Helt G."/>
            <person name="Nelson C.R."/>
            <person name="Miklos G.L.G."/>
            <person name="Abril J.F."/>
            <person name="Agbayani A."/>
            <person name="An H.-J."/>
            <person name="Andrews-Pfannkoch C."/>
            <person name="Baldwin D."/>
            <person name="Ballew R.M."/>
            <person name="Basu A."/>
            <person name="Baxendale J."/>
            <person name="Bayraktaroglu L."/>
            <person name="Beasley E.M."/>
            <person name="Beeson K.Y."/>
            <person name="Benos P.V."/>
            <person name="Berman B.P."/>
            <person name="Bhandari D."/>
            <person name="Bolshakov S."/>
            <person name="Borkova D."/>
            <person name="Botchan M.R."/>
            <person name="Bouck J."/>
            <person name="Brokstein P."/>
            <person name="Brottier P."/>
            <person name="Burtis K.C."/>
            <person name="Busam D.A."/>
            <person name="Butler H."/>
            <person name="Cadieu E."/>
            <person name="Center A."/>
            <person name="Chandra I."/>
            <person name="Cherry J.M."/>
            <person name="Cawley S."/>
            <person name="Dahlke C."/>
            <person name="Davenport L.B."/>
            <person name="Davies P."/>
            <person name="de Pablos B."/>
            <person name="Delcher A."/>
            <person name="Deng Z."/>
            <person name="Mays A.D."/>
            <person name="Dew I."/>
            <person name="Dietz S.M."/>
            <person name="Dodson K."/>
            <person name="Doup L.E."/>
            <person name="Downes M."/>
            <person name="Dugan-Rocha S."/>
            <person name="Dunkov B.C."/>
            <person name="Dunn P."/>
            <person name="Durbin K.J."/>
            <person name="Evangelista C.C."/>
            <person name="Ferraz C."/>
            <person name="Ferriera S."/>
            <person name="Fleischmann W."/>
            <person name="Fosler C."/>
            <person name="Gabrielian A.E."/>
            <person name="Garg N.S."/>
            <person name="Gelbart W.M."/>
            <person name="Glasser K."/>
            <person name="Glodek A."/>
            <person name="Gong F."/>
            <person name="Gorrell J.H."/>
            <person name="Gu Z."/>
            <person name="Guan P."/>
            <person name="Harris M."/>
            <person name="Harris N.L."/>
            <person name="Harvey D.A."/>
            <person name="Heiman T.J."/>
            <person name="Hernandez J.R."/>
            <person name="Houck J."/>
            <person name="Hostin D."/>
            <person name="Houston K.A."/>
            <person name="Howland T.J."/>
            <person name="Wei M.-H."/>
            <person name="Ibegwam C."/>
            <person name="Jalali M."/>
            <person name="Kalush F."/>
            <person name="Karpen G.H."/>
            <person name="Ke Z."/>
            <person name="Kennison J.A."/>
            <person name="Ketchum K.A."/>
            <person name="Kimmel B.E."/>
            <person name="Kodira C.D."/>
            <person name="Kraft C.L."/>
            <person name="Kravitz S."/>
            <person name="Kulp D."/>
            <person name="Lai Z."/>
            <person name="Lasko P."/>
            <person name="Lei Y."/>
            <person name="Levitsky A.A."/>
            <person name="Li J.H."/>
            <person name="Li Z."/>
            <person name="Liang Y."/>
            <person name="Lin X."/>
            <person name="Liu X."/>
            <person name="Mattei B."/>
            <person name="McIntosh T.C."/>
            <person name="McLeod M.P."/>
            <person name="McPherson D."/>
            <person name="Merkulov G."/>
            <person name="Milshina N.V."/>
            <person name="Mobarry C."/>
            <person name="Morris J."/>
            <person name="Moshrefi A."/>
            <person name="Mount S.M."/>
            <person name="Moy M."/>
            <person name="Murphy B."/>
            <person name="Murphy L."/>
            <person name="Muzny D.M."/>
            <person name="Nelson D.L."/>
            <person name="Nelson D.R."/>
            <person name="Nelson K.A."/>
            <person name="Nixon K."/>
            <person name="Nusskern D.R."/>
            <person name="Pacleb J.M."/>
            <person name="Palazzolo M."/>
            <person name="Pittman G.S."/>
            <person name="Pan S."/>
            <person name="Pollard J."/>
            <person name="Puri V."/>
            <person name="Reese M.G."/>
            <person name="Reinert K."/>
            <person name="Remington K."/>
            <person name="Saunders R.D.C."/>
            <person name="Scheeler F."/>
            <person name="Shen H."/>
            <person name="Shue B.C."/>
            <person name="Siden-Kiamos I."/>
            <person name="Simpson M."/>
            <person name="Skupski M.P."/>
            <person name="Smith T.J."/>
            <person name="Spier E."/>
            <person name="Spradling A.C."/>
            <person name="Stapleton M."/>
            <person name="Strong R."/>
            <person name="Sun E."/>
            <person name="Svirskas R."/>
            <person name="Tector C."/>
            <person name="Turner R."/>
            <person name="Venter E."/>
            <person name="Wang A.H."/>
            <person name="Wang X."/>
            <person name="Wang Z.-Y."/>
            <person name="Wassarman D.A."/>
            <person name="Weinstock G.M."/>
            <person name="Weissenbach J."/>
            <person name="Williams S.M."/>
            <person name="Woodage T."/>
            <person name="Worley K.C."/>
            <person name="Wu D."/>
            <person name="Yang S."/>
            <person name="Yao Q.A."/>
            <person name="Ye J."/>
            <person name="Yeh R.-F."/>
            <person name="Zaveri J.S."/>
            <person name="Zhan M."/>
            <person name="Zhang G."/>
            <person name="Zhao Q."/>
            <person name="Zheng L."/>
            <person name="Zheng X.H."/>
            <person name="Zhong F.N."/>
            <person name="Zhong W."/>
            <person name="Zhou X."/>
            <person name="Zhu S.C."/>
            <person name="Zhu X."/>
            <person name="Smith H.O."/>
            <person name="Gibbs R.A."/>
            <person name="Myers E.W."/>
            <person name="Rubin G.M."/>
            <person name="Venter J.C."/>
        </authorList>
    </citation>
    <scope>NUCLEOTIDE SEQUENCE [LARGE SCALE GENOMIC DNA]</scope>
    <source>
        <strain>Berkeley</strain>
    </source>
</reference>
<reference key="3">
    <citation type="journal article" date="2002" name="Genome Biol.">
        <title>Annotation of the Drosophila melanogaster euchromatic genome: a systematic review.</title>
        <authorList>
            <person name="Misra S."/>
            <person name="Crosby M.A."/>
            <person name="Mungall C.J."/>
            <person name="Matthews B.B."/>
            <person name="Campbell K.S."/>
            <person name="Hradecky P."/>
            <person name="Huang Y."/>
            <person name="Kaminker J.S."/>
            <person name="Millburn G.H."/>
            <person name="Prochnik S.E."/>
            <person name="Smith C.D."/>
            <person name="Tupy J.L."/>
            <person name="Whitfield E.J."/>
            <person name="Bayraktaroglu L."/>
            <person name="Berman B.P."/>
            <person name="Bettencourt B.R."/>
            <person name="Celniker S.E."/>
            <person name="de Grey A.D.N.J."/>
            <person name="Drysdale R.A."/>
            <person name="Harris N.L."/>
            <person name="Richter J."/>
            <person name="Russo S."/>
            <person name="Schroeder A.J."/>
            <person name="Shu S.Q."/>
            <person name="Stapleton M."/>
            <person name="Yamada C."/>
            <person name="Ashburner M."/>
            <person name="Gelbart W.M."/>
            <person name="Rubin G.M."/>
            <person name="Lewis S.E."/>
        </authorList>
    </citation>
    <scope>GENOME REANNOTATION</scope>
    <scope>ALTERNATIVE SPLICING</scope>
    <source>
        <strain>Berkeley</strain>
    </source>
</reference>
<reference evidence="9" key="4">
    <citation type="submission" date="2006-06" db="EMBL/GenBank/DDBJ databases">
        <authorList>
            <person name="Stapleton M."/>
            <person name="Brokstein P."/>
            <person name="Hong L."/>
            <person name="Agbayani A."/>
            <person name="Carlson J.W."/>
            <person name="Champe M."/>
            <person name="Chavez C."/>
            <person name="Dorsett V."/>
            <person name="Dresnek D."/>
            <person name="Farfan D."/>
            <person name="Frise E."/>
            <person name="George R.A."/>
            <person name="Gonzalez M."/>
            <person name="Guarin H."/>
            <person name="Kronmiller B."/>
            <person name="Li P.W."/>
            <person name="Liao G."/>
            <person name="Miranda A."/>
            <person name="Mungall C.J."/>
            <person name="Nunoo J."/>
            <person name="Pacleb J.M."/>
            <person name="Paragas V."/>
            <person name="Park S."/>
            <person name="Patel S."/>
            <person name="Phouanenavong S."/>
            <person name="Wan K.H."/>
            <person name="Yu C."/>
            <person name="Lewis S.E."/>
            <person name="Rubin G.M."/>
            <person name="Celniker S.E."/>
        </authorList>
    </citation>
    <scope>NUCLEOTIDE SEQUENCE [LARGE SCALE MRNA] (ISOFORMS A AND C)</scope>
    <source>
        <strain>Berkeley</strain>
        <tissue>Embryo</tissue>
    </source>
</reference>
<reference key="5">
    <citation type="journal article" date="2002" name="Genome Biol.">
        <title>A Drosophila full-length cDNA resource.</title>
        <authorList>
            <person name="Stapleton M."/>
            <person name="Carlson J.W."/>
            <person name="Brokstein P."/>
            <person name="Yu C."/>
            <person name="Champe M."/>
            <person name="George R.A."/>
            <person name="Guarin H."/>
            <person name="Kronmiller B."/>
            <person name="Pacleb J.M."/>
            <person name="Park S."/>
            <person name="Wan K.H."/>
            <person name="Rubin G.M."/>
            <person name="Celniker S.E."/>
        </authorList>
    </citation>
    <scope>NUCLEOTIDE SEQUENCE [LARGE SCALE MRNA] OF 1036-1571</scope>
    <source>
        <strain>Berkeley</strain>
        <tissue>Ovary</tissue>
    </source>
</reference>
<reference key="6">
    <citation type="journal article" date="2008" name="J. Proteome Res.">
        <title>Phosphoproteome analysis of Drosophila melanogaster embryos.</title>
        <authorList>
            <person name="Zhai B."/>
            <person name="Villen J."/>
            <person name="Beausoleil S.A."/>
            <person name="Mintseris J."/>
            <person name="Gygi S.P."/>
        </authorList>
    </citation>
    <scope>PHOSPHORYLATION [LARGE SCALE ANALYSIS] AT SER-496; SER-523; THR-524; SER-526 AND SER-615</scope>
    <scope>IDENTIFICATION BY MASS SPECTROMETRY</scope>
    <source>
        <tissue>Embryo</tissue>
    </source>
</reference>
<comment type="function">
    <text evidence="6">Guanine nucleotide-releasing protein that binds to SH3 domain of Crk. Transduces signals from Crk to activate RAS. Also involved in MAPK activation.</text>
</comment>
<comment type="alternative products">
    <event type="alternative splicing"/>
    <isoform>
        <id>O77086-1</id>
        <name>A</name>
        <sequence type="displayed"/>
    </isoform>
    <isoform>
        <id>O77086-2</id>
        <name>B</name>
        <sequence type="described" ref="VSP_001823"/>
    </isoform>
    <isoform>
        <id>O77086-3</id>
        <name>C</name>
        <sequence type="described" ref="VSP_035657 VSP_035658 VSP_001823"/>
    </isoform>
</comment>
<comment type="tissue specificity">
    <text evidence="6">Ubiquitous.</text>
</comment>
<comment type="developmental stage">
    <text evidence="6">Throughout development.</text>
</comment>
<comment type="sequence caution" evidence="9">
    <conflict type="frameshift">
        <sequence resource="EMBL-CDS" id="AAC35280"/>
    </conflict>
</comment>
<comment type="sequence caution" evidence="9">
    <conflict type="frameshift">
        <sequence resource="EMBL-CDS" id="AAM29360"/>
    </conflict>
</comment>
<comment type="sequence caution" evidence="9">
    <conflict type="frameshift">
        <sequence resource="EMBL-CDS" id="AAQ22488"/>
    </conflict>
</comment>